<gene>
    <name type="primary">frdB</name>
    <name type="ordered locus">c5241</name>
</gene>
<keyword id="KW-0001">2Fe-2S</keyword>
<keyword id="KW-0003">3Fe-4S</keyword>
<keyword id="KW-0004">4Fe-4S</keyword>
<keyword id="KW-0997">Cell inner membrane</keyword>
<keyword id="KW-1003">Cell membrane</keyword>
<keyword id="KW-0249">Electron transport</keyword>
<keyword id="KW-0408">Iron</keyword>
<keyword id="KW-0411">Iron-sulfur</keyword>
<keyword id="KW-0472">Membrane</keyword>
<keyword id="KW-0479">Metal-binding</keyword>
<keyword id="KW-0560">Oxidoreductase</keyword>
<keyword id="KW-1185">Reference proteome</keyword>
<keyword id="KW-0813">Transport</keyword>
<keyword id="KW-0816">Tricarboxylic acid cycle</keyword>
<accession>P0AC48</accession>
<accession>P00364</accession>
<proteinExistence type="inferred from homology"/>
<comment type="function">
    <text evidence="1">Two distinct, membrane-bound, FAD-containing enzymes are responsible for the catalysis of fumarate and succinate interconversion; the fumarate reductase is used in anaerobic growth, and the succinate dehydrogenase is used in aerobic growth.</text>
</comment>
<comment type="catalytic activity">
    <reaction evidence="1">
        <text>a quinone + succinate = fumarate + a quinol</text>
        <dbReference type="Rhea" id="RHEA:40523"/>
        <dbReference type="ChEBI" id="CHEBI:24646"/>
        <dbReference type="ChEBI" id="CHEBI:29806"/>
        <dbReference type="ChEBI" id="CHEBI:30031"/>
        <dbReference type="ChEBI" id="CHEBI:132124"/>
        <dbReference type="EC" id="1.3.5.1"/>
    </reaction>
</comment>
<comment type="catalytic activity">
    <reaction evidence="1">
        <text>a menaquinone + succinate = a menaquinol + fumarate</text>
        <dbReference type="Rhea" id="RHEA:27834"/>
        <dbReference type="Rhea" id="RHEA-COMP:9537"/>
        <dbReference type="Rhea" id="RHEA-COMP:9539"/>
        <dbReference type="ChEBI" id="CHEBI:16374"/>
        <dbReference type="ChEBI" id="CHEBI:18151"/>
        <dbReference type="ChEBI" id="CHEBI:29806"/>
        <dbReference type="ChEBI" id="CHEBI:30031"/>
        <dbReference type="EC" id="1.3.5.1"/>
    </reaction>
</comment>
<comment type="cofactor">
    <cofactor evidence="1">
        <name>[2Fe-2S] cluster</name>
        <dbReference type="ChEBI" id="CHEBI:190135"/>
    </cofactor>
    <text evidence="1">Binds 1 [2Fe-2S] cluster.</text>
</comment>
<comment type="cofactor">
    <cofactor evidence="1">
        <name>[3Fe-4S] cluster</name>
        <dbReference type="ChEBI" id="CHEBI:21137"/>
    </cofactor>
    <text evidence="1">Binds 1 [3Fe-4S] cluster.</text>
</comment>
<comment type="cofactor">
    <cofactor evidence="1">
        <name>[4Fe-4S] cluster</name>
        <dbReference type="ChEBI" id="CHEBI:49883"/>
    </cofactor>
    <text evidence="1">Binds 1 [4Fe-4S] cluster.</text>
</comment>
<comment type="subunit">
    <text evidence="1">Fumarate dehydrogenase forms part of an enzyme complex containing four subunits: a flavoprotein, an iron-sulfur, and two hydrophobic anchor proteins.</text>
</comment>
<comment type="subcellular location">
    <subcellularLocation>
        <location evidence="1">Cell inner membrane</location>
        <topology evidence="1">Peripheral membrane protein</topology>
        <orientation evidence="1">Cytoplasmic side</orientation>
    </subcellularLocation>
</comment>
<comment type="similarity">
    <text evidence="4">Belongs to the succinate dehydrogenase/fumarate reductase iron-sulfur protein family.</text>
</comment>
<name>FRDB_ECOL6</name>
<feature type="initiator methionine" description="Removed" evidence="1">
    <location>
        <position position="1"/>
    </location>
</feature>
<feature type="chain" id="PRO_0000158700" description="Fumarate reductase iron-sulfur subunit">
    <location>
        <begin position="2"/>
        <end position="244"/>
    </location>
</feature>
<feature type="domain" description="2Fe-2S ferredoxin-type" evidence="2">
    <location>
        <begin position="16"/>
        <end position="97"/>
    </location>
</feature>
<feature type="domain" description="4Fe-4S ferredoxin-type" evidence="3">
    <location>
        <begin position="140"/>
        <end position="169"/>
    </location>
</feature>
<feature type="binding site" evidence="1">
    <location>
        <position position="14"/>
    </location>
    <ligand>
        <name>a menaquinone</name>
        <dbReference type="ChEBI" id="CHEBI:16374"/>
    </ligand>
</feature>
<feature type="binding site" evidence="1">
    <location>
        <position position="58"/>
    </location>
    <ligand>
        <name>[2Fe-2S] cluster</name>
        <dbReference type="ChEBI" id="CHEBI:190135"/>
    </ligand>
</feature>
<feature type="binding site" evidence="1">
    <location>
        <position position="63"/>
    </location>
    <ligand>
        <name>[2Fe-2S] cluster</name>
        <dbReference type="ChEBI" id="CHEBI:190135"/>
    </ligand>
</feature>
<feature type="binding site" evidence="1">
    <location>
        <position position="66"/>
    </location>
    <ligand>
        <name>[2Fe-2S] cluster</name>
        <dbReference type="ChEBI" id="CHEBI:190135"/>
    </ligand>
</feature>
<feature type="binding site" evidence="1">
    <location>
        <position position="78"/>
    </location>
    <ligand>
        <name>[2Fe-2S] cluster</name>
        <dbReference type="ChEBI" id="CHEBI:190135"/>
    </ligand>
</feature>
<feature type="binding site" evidence="1">
    <location>
        <position position="149"/>
    </location>
    <ligand>
        <name>[4Fe-4S] cluster</name>
        <dbReference type="ChEBI" id="CHEBI:49883"/>
    </ligand>
</feature>
<feature type="binding site" evidence="1">
    <location>
        <position position="152"/>
    </location>
    <ligand>
        <name>[4Fe-4S] cluster</name>
        <dbReference type="ChEBI" id="CHEBI:49883"/>
    </ligand>
</feature>
<feature type="binding site" evidence="1">
    <location>
        <position position="155"/>
    </location>
    <ligand>
        <name>[4Fe-4S] cluster</name>
        <dbReference type="ChEBI" id="CHEBI:49883"/>
    </ligand>
</feature>
<feature type="binding site" evidence="1">
    <location>
        <position position="159"/>
    </location>
    <ligand>
        <name>[3Fe-4S] cluster</name>
        <dbReference type="ChEBI" id="CHEBI:21137"/>
    </ligand>
</feature>
<feature type="binding site" evidence="1">
    <location>
        <position position="205"/>
    </location>
    <ligand>
        <name>[3Fe-4S] cluster</name>
        <dbReference type="ChEBI" id="CHEBI:21137"/>
    </ligand>
</feature>
<feature type="binding site" evidence="1">
    <location>
        <position position="211"/>
    </location>
    <ligand>
        <name>[3Fe-4S] cluster</name>
        <dbReference type="ChEBI" id="CHEBI:21137"/>
    </ligand>
</feature>
<feature type="binding site" evidence="1">
    <location>
        <position position="215"/>
    </location>
    <ligand>
        <name>[4Fe-4S] cluster</name>
        <dbReference type="ChEBI" id="CHEBI:49883"/>
    </ligand>
</feature>
<feature type="binding site" evidence="1">
    <location>
        <begin position="226"/>
        <end position="229"/>
    </location>
    <ligand>
        <name>a menaquinone</name>
        <dbReference type="ChEBI" id="CHEBI:16374"/>
    </ligand>
</feature>
<dbReference type="EC" id="1.3.5.1" evidence="1"/>
<dbReference type="EMBL" id="AE014075">
    <property type="protein sequence ID" value="AAN83663.1"/>
    <property type="molecule type" value="Genomic_DNA"/>
</dbReference>
<dbReference type="RefSeq" id="WP_000829498.1">
    <property type="nucleotide sequence ID" value="NZ_CP051263.1"/>
</dbReference>
<dbReference type="SMR" id="P0AC48"/>
<dbReference type="STRING" id="199310.c5241"/>
<dbReference type="GeneID" id="93777669"/>
<dbReference type="KEGG" id="ecc:c5241"/>
<dbReference type="eggNOG" id="COG0479">
    <property type="taxonomic scope" value="Bacteria"/>
</dbReference>
<dbReference type="HOGENOM" id="CLU_044838_3_2_6"/>
<dbReference type="BioCyc" id="ECOL199310:C5241-MONOMER"/>
<dbReference type="Proteomes" id="UP000001410">
    <property type="component" value="Chromosome"/>
</dbReference>
<dbReference type="GO" id="GO:0005886">
    <property type="term" value="C:plasma membrane"/>
    <property type="evidence" value="ECO:0007669"/>
    <property type="project" value="UniProtKB-SubCell"/>
</dbReference>
<dbReference type="GO" id="GO:0051537">
    <property type="term" value="F:2 iron, 2 sulfur cluster binding"/>
    <property type="evidence" value="ECO:0007669"/>
    <property type="project" value="UniProtKB-KW"/>
</dbReference>
<dbReference type="GO" id="GO:0051538">
    <property type="term" value="F:3 iron, 4 sulfur cluster binding"/>
    <property type="evidence" value="ECO:0007669"/>
    <property type="project" value="UniProtKB-KW"/>
</dbReference>
<dbReference type="GO" id="GO:0051539">
    <property type="term" value="F:4 iron, 4 sulfur cluster binding"/>
    <property type="evidence" value="ECO:0007669"/>
    <property type="project" value="UniProtKB-KW"/>
</dbReference>
<dbReference type="GO" id="GO:0009055">
    <property type="term" value="F:electron transfer activity"/>
    <property type="evidence" value="ECO:0007669"/>
    <property type="project" value="InterPro"/>
</dbReference>
<dbReference type="GO" id="GO:0046872">
    <property type="term" value="F:metal ion binding"/>
    <property type="evidence" value="ECO:0007669"/>
    <property type="project" value="UniProtKB-KW"/>
</dbReference>
<dbReference type="GO" id="GO:0008177">
    <property type="term" value="F:succinate dehydrogenase (quinone) activity"/>
    <property type="evidence" value="ECO:0007669"/>
    <property type="project" value="RHEA"/>
</dbReference>
<dbReference type="GO" id="GO:0009061">
    <property type="term" value="P:anaerobic respiration"/>
    <property type="evidence" value="ECO:0007669"/>
    <property type="project" value="TreeGrafter"/>
</dbReference>
<dbReference type="GO" id="GO:0006099">
    <property type="term" value="P:tricarboxylic acid cycle"/>
    <property type="evidence" value="ECO:0007669"/>
    <property type="project" value="UniProtKB-KW"/>
</dbReference>
<dbReference type="FunFam" id="1.10.1060.10:FF:000002">
    <property type="entry name" value="Succinate dehydrogenase iron-sulfur subunit"/>
    <property type="match status" value="1"/>
</dbReference>
<dbReference type="FunFam" id="3.10.20.30:FF:000009">
    <property type="entry name" value="Succinate dehydrogenase iron-sulfur subunit"/>
    <property type="match status" value="1"/>
</dbReference>
<dbReference type="Gene3D" id="3.10.20.30">
    <property type="match status" value="1"/>
</dbReference>
<dbReference type="Gene3D" id="1.10.1060.10">
    <property type="entry name" value="Alpha-helical ferredoxin"/>
    <property type="match status" value="1"/>
</dbReference>
<dbReference type="InterPro" id="IPR036010">
    <property type="entry name" value="2Fe-2S_ferredoxin-like_sf"/>
</dbReference>
<dbReference type="InterPro" id="IPR001041">
    <property type="entry name" value="2Fe-2S_ferredoxin-type"/>
</dbReference>
<dbReference type="InterPro" id="IPR006058">
    <property type="entry name" value="2Fe2S_fd_BS"/>
</dbReference>
<dbReference type="InterPro" id="IPR017896">
    <property type="entry name" value="4Fe4S_Fe-S-bd"/>
</dbReference>
<dbReference type="InterPro" id="IPR017900">
    <property type="entry name" value="4Fe4S_Fe_S_CS"/>
</dbReference>
<dbReference type="InterPro" id="IPR012675">
    <property type="entry name" value="Beta-grasp_dom_sf"/>
</dbReference>
<dbReference type="InterPro" id="IPR009051">
    <property type="entry name" value="Helical_ferredxn"/>
</dbReference>
<dbReference type="InterPro" id="IPR004489">
    <property type="entry name" value="Succ_DH/fum_Rdtase_Fe-S"/>
</dbReference>
<dbReference type="InterPro" id="IPR025192">
    <property type="entry name" value="Succ_DH/fum_Rdtase_N"/>
</dbReference>
<dbReference type="NCBIfam" id="TIGR00384">
    <property type="entry name" value="dhsB"/>
    <property type="match status" value="1"/>
</dbReference>
<dbReference type="NCBIfam" id="NF004616">
    <property type="entry name" value="PRK05950.1"/>
    <property type="match status" value="1"/>
</dbReference>
<dbReference type="NCBIfam" id="NF009051">
    <property type="entry name" value="PRK12385.1"/>
    <property type="match status" value="1"/>
</dbReference>
<dbReference type="PANTHER" id="PTHR43551">
    <property type="entry name" value="FUMARATE REDUCTASE IRON-SULFUR SUBUNIT"/>
    <property type="match status" value="1"/>
</dbReference>
<dbReference type="PANTHER" id="PTHR43551:SF2">
    <property type="entry name" value="FUMARATE REDUCTASE IRON-SULFUR SUBUNIT"/>
    <property type="match status" value="1"/>
</dbReference>
<dbReference type="Pfam" id="PF13085">
    <property type="entry name" value="Fer2_3"/>
    <property type="match status" value="1"/>
</dbReference>
<dbReference type="Pfam" id="PF13237">
    <property type="entry name" value="Fer4_10"/>
    <property type="match status" value="1"/>
</dbReference>
<dbReference type="SUPFAM" id="SSF54292">
    <property type="entry name" value="2Fe-2S ferredoxin-like"/>
    <property type="match status" value="1"/>
</dbReference>
<dbReference type="SUPFAM" id="SSF46548">
    <property type="entry name" value="alpha-helical ferredoxin"/>
    <property type="match status" value="1"/>
</dbReference>
<dbReference type="PROSITE" id="PS00197">
    <property type="entry name" value="2FE2S_FER_1"/>
    <property type="match status" value="1"/>
</dbReference>
<dbReference type="PROSITE" id="PS51085">
    <property type="entry name" value="2FE2S_FER_2"/>
    <property type="match status" value="1"/>
</dbReference>
<dbReference type="PROSITE" id="PS00198">
    <property type="entry name" value="4FE4S_FER_1"/>
    <property type="match status" value="1"/>
</dbReference>
<dbReference type="PROSITE" id="PS51379">
    <property type="entry name" value="4FE4S_FER_2"/>
    <property type="match status" value="1"/>
</dbReference>
<evidence type="ECO:0000250" key="1">
    <source>
        <dbReference type="UniProtKB" id="P0AC47"/>
    </source>
</evidence>
<evidence type="ECO:0000255" key="2">
    <source>
        <dbReference type="PROSITE-ProRule" id="PRU00465"/>
    </source>
</evidence>
<evidence type="ECO:0000255" key="3">
    <source>
        <dbReference type="PROSITE-ProRule" id="PRU00711"/>
    </source>
</evidence>
<evidence type="ECO:0000305" key="4"/>
<reference key="1">
    <citation type="journal article" date="2002" name="Proc. Natl. Acad. Sci. U.S.A.">
        <title>Extensive mosaic structure revealed by the complete genome sequence of uropathogenic Escherichia coli.</title>
        <authorList>
            <person name="Welch R.A."/>
            <person name="Burland V."/>
            <person name="Plunkett G. III"/>
            <person name="Redford P."/>
            <person name="Roesch P."/>
            <person name="Rasko D."/>
            <person name="Buckles E.L."/>
            <person name="Liou S.-R."/>
            <person name="Boutin A."/>
            <person name="Hackett J."/>
            <person name="Stroud D."/>
            <person name="Mayhew G.F."/>
            <person name="Rose D.J."/>
            <person name="Zhou S."/>
            <person name="Schwartz D.C."/>
            <person name="Perna N.T."/>
            <person name="Mobley H.L.T."/>
            <person name="Donnenberg M.S."/>
            <person name="Blattner F.R."/>
        </authorList>
    </citation>
    <scope>NUCLEOTIDE SEQUENCE [LARGE SCALE GENOMIC DNA]</scope>
    <source>
        <strain>CFT073 / ATCC 700928 / UPEC</strain>
    </source>
</reference>
<protein>
    <recommendedName>
        <fullName>Fumarate reductase iron-sulfur subunit</fullName>
        <ecNumber evidence="1">1.3.5.1</ecNumber>
    </recommendedName>
    <alternativeName>
        <fullName>Quinol-fumarate reductase iron-sulfur subunit</fullName>
        <shortName>QFR iron-sulfur subunit</shortName>
    </alternativeName>
</protein>
<sequence>MAEMKNLKIEVVRYNPEVDTAPHSAFYEVPYDATTSLLDALGYIKDNLAPDLSYRWSCRMAICGSCGMMVNNVPKLACKTFLRDYTDGMKVEALANFPIERDLVVDMTHFIESLEAIKPYIIGNSRTADQGTNIQTPAQMAKYHQFSGCINCGLCYAACPQFGLNPEFIGPAAITLAHRYNEDSRDHGKKERMAQLNSQNGVWSCTFVGYCSEVCPKHVDPAAAIQQGKVESSKDFLIATLKPR</sequence>
<organism>
    <name type="scientific">Escherichia coli O6:H1 (strain CFT073 / ATCC 700928 / UPEC)</name>
    <dbReference type="NCBI Taxonomy" id="199310"/>
    <lineage>
        <taxon>Bacteria</taxon>
        <taxon>Pseudomonadati</taxon>
        <taxon>Pseudomonadota</taxon>
        <taxon>Gammaproteobacteria</taxon>
        <taxon>Enterobacterales</taxon>
        <taxon>Enterobacteriaceae</taxon>
        <taxon>Escherichia</taxon>
    </lineage>
</organism>